<geneLocation type="chloroplast"/>
<evidence type="ECO:0000255" key="1">
    <source>
        <dbReference type="HAMAP-Rule" id="MF_00808"/>
    </source>
</evidence>
<sequence length="35" mass="4090">MEALVYTFLLVSTLGIIFFAIFFREPPKVPNKKMK</sequence>
<proteinExistence type="inferred from homology"/>
<feature type="chain" id="PRO_0000217958" description="Photosystem II reaction center protein T">
    <location>
        <begin position="1"/>
        <end position="35"/>
    </location>
</feature>
<feature type="transmembrane region" description="Helical" evidence="1">
    <location>
        <begin position="3"/>
        <end position="23"/>
    </location>
</feature>
<name>PSBT_NYMOD</name>
<dbReference type="EMBL" id="AF188851">
    <property type="protein sequence ID" value="AAF82667.1"/>
    <property type="molecule type" value="Genomic_DNA"/>
</dbReference>
<dbReference type="RefSeq" id="YP_010167571.1">
    <property type="nucleotide sequence ID" value="NC_057567.1"/>
</dbReference>
<dbReference type="SMR" id="Q9MSQ0"/>
<dbReference type="GeneID" id="67273917"/>
<dbReference type="GO" id="GO:0009535">
    <property type="term" value="C:chloroplast thylakoid membrane"/>
    <property type="evidence" value="ECO:0007669"/>
    <property type="project" value="UniProtKB-SubCell"/>
</dbReference>
<dbReference type="GO" id="GO:0009539">
    <property type="term" value="C:photosystem II reaction center"/>
    <property type="evidence" value="ECO:0007669"/>
    <property type="project" value="InterPro"/>
</dbReference>
<dbReference type="GO" id="GO:0015979">
    <property type="term" value="P:photosynthesis"/>
    <property type="evidence" value="ECO:0007669"/>
    <property type="project" value="UniProtKB-UniRule"/>
</dbReference>
<dbReference type="HAMAP" id="MF_00808">
    <property type="entry name" value="PSII_PsbT"/>
    <property type="match status" value="1"/>
</dbReference>
<dbReference type="InterPro" id="IPR001743">
    <property type="entry name" value="PSII_PsbT"/>
</dbReference>
<dbReference type="InterPro" id="IPR037268">
    <property type="entry name" value="PSII_PsbT_sf"/>
</dbReference>
<dbReference type="PANTHER" id="PTHR36411">
    <property type="match status" value="1"/>
</dbReference>
<dbReference type="PANTHER" id="PTHR36411:SF2">
    <property type="entry name" value="PHOTOSYSTEM II REACTION CENTER PROTEIN T"/>
    <property type="match status" value="1"/>
</dbReference>
<dbReference type="Pfam" id="PF01405">
    <property type="entry name" value="PsbT"/>
    <property type="match status" value="1"/>
</dbReference>
<dbReference type="SUPFAM" id="SSF161029">
    <property type="entry name" value="Photosystem II reaction center protein T, PsbT"/>
    <property type="match status" value="1"/>
</dbReference>
<reference key="1">
    <citation type="journal article" date="2000" name="Curr. Genet.">
        <title>Evolutionary significance of an unusual chloroplast DNA inversion found in two basal angiosperm lineages.</title>
        <authorList>
            <person name="Graham S.W."/>
            <person name="Olmstead R.G."/>
        </authorList>
    </citation>
    <scope>NUCLEOTIDE SEQUENCE [GENOMIC DNA]</scope>
</reference>
<protein>
    <recommendedName>
        <fullName evidence="1">Photosystem II reaction center protein T</fullName>
        <shortName evidence="1">PSII-T</shortName>
    </recommendedName>
</protein>
<accession>Q9MSQ0</accession>
<keyword id="KW-0150">Chloroplast</keyword>
<keyword id="KW-0472">Membrane</keyword>
<keyword id="KW-0602">Photosynthesis</keyword>
<keyword id="KW-0604">Photosystem II</keyword>
<keyword id="KW-0934">Plastid</keyword>
<keyword id="KW-0793">Thylakoid</keyword>
<keyword id="KW-0812">Transmembrane</keyword>
<keyword id="KW-1133">Transmembrane helix</keyword>
<gene>
    <name evidence="1" type="primary">psbT</name>
</gene>
<organism>
    <name type="scientific">Nymphaea odorata</name>
    <name type="common">White water lily</name>
    <dbReference type="NCBI Taxonomy" id="4419"/>
    <lineage>
        <taxon>Eukaryota</taxon>
        <taxon>Viridiplantae</taxon>
        <taxon>Streptophyta</taxon>
        <taxon>Embryophyta</taxon>
        <taxon>Tracheophyta</taxon>
        <taxon>Spermatophyta</taxon>
        <taxon>Magnoliopsida</taxon>
        <taxon>Nymphaeales</taxon>
        <taxon>Nymphaeaceae</taxon>
        <taxon>Nymphaea</taxon>
    </lineage>
</organism>
<comment type="function">
    <text evidence="1">Found at the monomer-monomer interface of the photosystem II (PS II) dimer, plays a role in assembly and dimerization of PSII. PSII is a light-driven water plastoquinone oxidoreductase, using light energy to abstract electrons from H(2)O, generating a proton gradient subsequently used for ATP formation.</text>
</comment>
<comment type="subunit">
    <text evidence="1">PSII is composed of 1 copy each of membrane proteins PsbA, PsbB, PsbC, PsbD, PsbE, PsbF, PsbH, PsbI, PsbJ, PsbK, PsbL, PsbM, PsbT, PsbY, PsbZ, Psb30/Ycf12, at least 3 peripheral proteins of the oxygen-evolving complex and a large number of cofactors. It forms dimeric complexes.</text>
</comment>
<comment type="subcellular location">
    <subcellularLocation>
        <location evidence="1">Plastid</location>
        <location evidence="1">Chloroplast thylakoid membrane</location>
        <topology evidence="1">Single-pass membrane protein</topology>
    </subcellularLocation>
</comment>
<comment type="similarity">
    <text evidence="1">Belongs to the PsbT family.</text>
</comment>